<protein>
    <recommendedName>
        <fullName evidence="1">4-hydroxy-tetrahydrodipicolinate synthase</fullName>
        <shortName evidence="1">HTPA synthase</shortName>
        <ecNumber evidence="1">4.3.3.7</ecNumber>
    </recommendedName>
</protein>
<keyword id="KW-0028">Amino-acid biosynthesis</keyword>
<keyword id="KW-0963">Cytoplasm</keyword>
<keyword id="KW-0220">Diaminopimelate biosynthesis</keyword>
<keyword id="KW-0456">Lyase</keyword>
<keyword id="KW-0457">Lysine biosynthesis</keyword>
<keyword id="KW-1185">Reference proteome</keyword>
<keyword id="KW-0704">Schiff base</keyword>
<gene>
    <name evidence="1" type="primary">dapA</name>
    <name type="ordered locus">Saro_1443</name>
</gene>
<dbReference type="EC" id="4.3.3.7" evidence="1"/>
<dbReference type="EMBL" id="CP000248">
    <property type="protein sequence ID" value="ABD25887.1"/>
    <property type="molecule type" value="Genomic_DNA"/>
</dbReference>
<dbReference type="RefSeq" id="WP_011445101.1">
    <property type="nucleotide sequence ID" value="NC_007794.1"/>
</dbReference>
<dbReference type="SMR" id="Q2G8D6"/>
<dbReference type="STRING" id="279238.Saro_1443"/>
<dbReference type="KEGG" id="nar:Saro_1443"/>
<dbReference type="eggNOG" id="COG0329">
    <property type="taxonomic scope" value="Bacteria"/>
</dbReference>
<dbReference type="HOGENOM" id="CLU_049343_7_1_5"/>
<dbReference type="UniPathway" id="UPA00034">
    <property type="reaction ID" value="UER00017"/>
</dbReference>
<dbReference type="Proteomes" id="UP000009134">
    <property type="component" value="Chromosome"/>
</dbReference>
<dbReference type="GO" id="GO:0005829">
    <property type="term" value="C:cytosol"/>
    <property type="evidence" value="ECO:0007669"/>
    <property type="project" value="TreeGrafter"/>
</dbReference>
<dbReference type="GO" id="GO:0008840">
    <property type="term" value="F:4-hydroxy-tetrahydrodipicolinate synthase activity"/>
    <property type="evidence" value="ECO:0007669"/>
    <property type="project" value="UniProtKB-UniRule"/>
</dbReference>
<dbReference type="GO" id="GO:0019877">
    <property type="term" value="P:diaminopimelate biosynthetic process"/>
    <property type="evidence" value="ECO:0007669"/>
    <property type="project" value="UniProtKB-UniRule"/>
</dbReference>
<dbReference type="GO" id="GO:0009089">
    <property type="term" value="P:lysine biosynthetic process via diaminopimelate"/>
    <property type="evidence" value="ECO:0007669"/>
    <property type="project" value="UniProtKB-UniRule"/>
</dbReference>
<dbReference type="CDD" id="cd00950">
    <property type="entry name" value="DHDPS"/>
    <property type="match status" value="1"/>
</dbReference>
<dbReference type="Gene3D" id="3.20.20.70">
    <property type="entry name" value="Aldolase class I"/>
    <property type="match status" value="1"/>
</dbReference>
<dbReference type="HAMAP" id="MF_00418">
    <property type="entry name" value="DapA"/>
    <property type="match status" value="1"/>
</dbReference>
<dbReference type="InterPro" id="IPR013785">
    <property type="entry name" value="Aldolase_TIM"/>
</dbReference>
<dbReference type="InterPro" id="IPR005263">
    <property type="entry name" value="DapA"/>
</dbReference>
<dbReference type="InterPro" id="IPR002220">
    <property type="entry name" value="DapA-like"/>
</dbReference>
<dbReference type="InterPro" id="IPR020624">
    <property type="entry name" value="Schiff_base-form_aldolases_CS"/>
</dbReference>
<dbReference type="NCBIfam" id="TIGR00674">
    <property type="entry name" value="dapA"/>
    <property type="match status" value="1"/>
</dbReference>
<dbReference type="PANTHER" id="PTHR12128:SF66">
    <property type="entry name" value="4-HYDROXY-2-OXOGLUTARATE ALDOLASE, MITOCHONDRIAL"/>
    <property type="match status" value="1"/>
</dbReference>
<dbReference type="PANTHER" id="PTHR12128">
    <property type="entry name" value="DIHYDRODIPICOLINATE SYNTHASE"/>
    <property type="match status" value="1"/>
</dbReference>
<dbReference type="Pfam" id="PF00701">
    <property type="entry name" value="DHDPS"/>
    <property type="match status" value="1"/>
</dbReference>
<dbReference type="PIRSF" id="PIRSF001365">
    <property type="entry name" value="DHDPS"/>
    <property type="match status" value="1"/>
</dbReference>
<dbReference type="PRINTS" id="PR00146">
    <property type="entry name" value="DHPICSNTHASE"/>
</dbReference>
<dbReference type="SMART" id="SM01130">
    <property type="entry name" value="DHDPS"/>
    <property type="match status" value="1"/>
</dbReference>
<dbReference type="SUPFAM" id="SSF51569">
    <property type="entry name" value="Aldolase"/>
    <property type="match status" value="1"/>
</dbReference>
<dbReference type="PROSITE" id="PS00665">
    <property type="entry name" value="DHDPS_1"/>
    <property type="match status" value="1"/>
</dbReference>
<accession>Q2G8D6</accession>
<organism>
    <name type="scientific">Novosphingobium aromaticivorans (strain ATCC 700278 / DSM 12444 / CCUG 56034 / CIP 105152 / NBRC 16084 / F199)</name>
    <dbReference type="NCBI Taxonomy" id="279238"/>
    <lineage>
        <taxon>Bacteria</taxon>
        <taxon>Pseudomonadati</taxon>
        <taxon>Pseudomonadota</taxon>
        <taxon>Alphaproteobacteria</taxon>
        <taxon>Sphingomonadales</taxon>
        <taxon>Sphingomonadaceae</taxon>
        <taxon>Novosphingobium</taxon>
    </lineage>
</organism>
<proteinExistence type="inferred from homology"/>
<feature type="chain" id="PRO_1000050234" description="4-hydroxy-tetrahydrodipicolinate synthase">
    <location>
        <begin position="1"/>
        <end position="296"/>
    </location>
</feature>
<feature type="active site" description="Proton donor/acceptor" evidence="1">
    <location>
        <position position="132"/>
    </location>
</feature>
<feature type="active site" description="Schiff-base intermediate with substrate" evidence="1">
    <location>
        <position position="162"/>
    </location>
</feature>
<feature type="binding site" evidence="1">
    <location>
        <position position="44"/>
    </location>
    <ligand>
        <name>pyruvate</name>
        <dbReference type="ChEBI" id="CHEBI:15361"/>
    </ligand>
</feature>
<feature type="binding site" evidence="1">
    <location>
        <position position="204"/>
    </location>
    <ligand>
        <name>pyruvate</name>
        <dbReference type="ChEBI" id="CHEBI:15361"/>
    </ligand>
</feature>
<feature type="site" description="Part of a proton relay during catalysis" evidence="1">
    <location>
        <position position="43"/>
    </location>
</feature>
<feature type="site" description="Part of a proton relay during catalysis" evidence="1">
    <location>
        <position position="106"/>
    </location>
</feature>
<reference key="1">
    <citation type="submission" date="2006-01" db="EMBL/GenBank/DDBJ databases">
        <title>Complete sequence of Novosphingobium aromaticivorans DSM 12444.</title>
        <authorList>
            <consortium name="US DOE Joint Genome Institute"/>
            <person name="Copeland A."/>
            <person name="Lucas S."/>
            <person name="Lapidus A."/>
            <person name="Barry K."/>
            <person name="Detter J.C."/>
            <person name="Glavina T."/>
            <person name="Hammon N."/>
            <person name="Israni S."/>
            <person name="Pitluck S."/>
            <person name="Chain P."/>
            <person name="Malfatti S."/>
            <person name="Shin M."/>
            <person name="Vergez L."/>
            <person name="Schmutz J."/>
            <person name="Larimer F."/>
            <person name="Land M."/>
            <person name="Kyrpides N."/>
            <person name="Ivanova N."/>
            <person name="Fredrickson J."/>
            <person name="Balkwill D."/>
            <person name="Romine M.F."/>
            <person name="Richardson P."/>
        </authorList>
    </citation>
    <scope>NUCLEOTIDE SEQUENCE [LARGE SCALE GENOMIC DNA]</scope>
    <source>
        <strain>ATCC 700278 / DSM 12444 / CCUG 56034 / CIP 105152 / NBRC 16084 / F199</strain>
    </source>
</reference>
<name>DAPA_NOVAD</name>
<sequence length="296" mass="31695">MFSGSIPALVTPFRDGAFDEKAFRRLVDWQIENGSSALVPCGTTGEASTLSNAEHHRVIEVCVEQAAGRVPVIAGCGSNDTMNALLHMNFSKKCGAQAALCVAPYYNRPSQAGIIAHFSYLAEHNDLPIVLYNVPGRTVTDILPETVCELAKRYPDKIIGIKDASGDLSRVTDHRMGIGKHFCQLSGDDELALPANAAGAVGCISVTANVAPRLCADFQAACAANDLEKARELNDKLYPLHYAMFEDASPGPVKYALSRVFADINEDLRLPMVPCNEAARKAVDAALVHAGLLELA</sequence>
<evidence type="ECO:0000255" key="1">
    <source>
        <dbReference type="HAMAP-Rule" id="MF_00418"/>
    </source>
</evidence>
<evidence type="ECO:0000305" key="2"/>
<comment type="function">
    <text evidence="1">Catalyzes the condensation of (S)-aspartate-beta-semialdehyde [(S)-ASA] and pyruvate to 4-hydroxy-tetrahydrodipicolinate (HTPA).</text>
</comment>
<comment type="catalytic activity">
    <reaction evidence="1">
        <text>L-aspartate 4-semialdehyde + pyruvate = (2S,4S)-4-hydroxy-2,3,4,5-tetrahydrodipicolinate + H2O + H(+)</text>
        <dbReference type="Rhea" id="RHEA:34171"/>
        <dbReference type="ChEBI" id="CHEBI:15361"/>
        <dbReference type="ChEBI" id="CHEBI:15377"/>
        <dbReference type="ChEBI" id="CHEBI:15378"/>
        <dbReference type="ChEBI" id="CHEBI:67139"/>
        <dbReference type="ChEBI" id="CHEBI:537519"/>
        <dbReference type="EC" id="4.3.3.7"/>
    </reaction>
</comment>
<comment type="pathway">
    <text evidence="1">Amino-acid biosynthesis; L-lysine biosynthesis via DAP pathway; (S)-tetrahydrodipicolinate from L-aspartate: step 3/4.</text>
</comment>
<comment type="subunit">
    <text evidence="1">Homotetramer; dimer of dimers.</text>
</comment>
<comment type="subcellular location">
    <subcellularLocation>
        <location evidence="1">Cytoplasm</location>
    </subcellularLocation>
</comment>
<comment type="similarity">
    <text evidence="1">Belongs to the DapA family.</text>
</comment>
<comment type="caution">
    <text evidence="2">Was originally thought to be a dihydrodipicolinate synthase (DHDPS), catalyzing the condensation of (S)-aspartate-beta-semialdehyde [(S)-ASA] and pyruvate to dihydrodipicolinate (DHDP). However, it was shown in E.coli that the product of the enzymatic reaction is not dihydrodipicolinate but in fact (4S)-4-hydroxy-2,3,4,5-tetrahydro-(2S)-dipicolinic acid (HTPA), and that the consecutive dehydration reaction leading to DHDP is not spontaneous but catalyzed by DapB.</text>
</comment>